<evidence type="ECO:0000255" key="1"/>
<evidence type="ECO:0000305" key="2"/>
<comment type="subcellular location">
    <subcellularLocation>
        <location evidence="2">Membrane</location>
        <topology evidence="2">Multi-pass membrane protein</topology>
    </subcellularLocation>
</comment>
<comment type="similarity">
    <text evidence="2">Belongs to the cytomegalovirus US12 family.</text>
</comment>
<proteinExistence type="inferred from homology"/>
<gene>
    <name type="primary">US18</name>
</gene>
<keyword id="KW-0426">Late protein</keyword>
<keyword id="KW-0472">Membrane</keyword>
<keyword id="KW-0812">Transmembrane</keyword>
<keyword id="KW-1133">Transmembrane helix</keyword>
<feature type="chain" id="PRO_0000115278" description="Transmembrane protein HWLF5">
    <location>
        <begin position="1"/>
        <end position="274"/>
    </location>
</feature>
<feature type="transmembrane region" description="Helical" evidence="1">
    <location>
        <begin position="49"/>
        <end position="69"/>
    </location>
</feature>
<feature type="transmembrane region" description="Helical" evidence="1">
    <location>
        <begin position="75"/>
        <end position="95"/>
    </location>
</feature>
<feature type="transmembrane region" description="Helical" evidence="1">
    <location>
        <begin position="108"/>
        <end position="128"/>
    </location>
</feature>
<feature type="transmembrane region" description="Helical" evidence="1">
    <location>
        <begin position="134"/>
        <end position="154"/>
    </location>
</feature>
<feature type="transmembrane region" description="Helical" evidence="1">
    <location>
        <begin position="168"/>
        <end position="188"/>
    </location>
</feature>
<feature type="transmembrane region" description="Helical" evidence="1">
    <location>
        <begin position="196"/>
        <end position="216"/>
    </location>
</feature>
<feature type="transmembrane region" description="Helical" evidence="1">
    <location>
        <begin position="228"/>
        <end position="248"/>
    </location>
</feature>
<organism>
    <name type="scientific">Human cytomegalovirus (strain Towne)</name>
    <name type="common">HHV-5</name>
    <name type="synonym">Human herpesvirus 5</name>
    <dbReference type="NCBI Taxonomy" id="10363"/>
    <lineage>
        <taxon>Viruses</taxon>
        <taxon>Duplodnaviria</taxon>
        <taxon>Heunggongvirae</taxon>
        <taxon>Peploviricota</taxon>
        <taxon>Herviviricetes</taxon>
        <taxon>Herpesvirales</taxon>
        <taxon>Orthoherpesviridae</taxon>
        <taxon>Betaherpesvirinae</taxon>
        <taxon>Cytomegalovirus</taxon>
        <taxon>Cytomegalovirus humanbeta5</taxon>
        <taxon>Human cytomegalovirus</taxon>
    </lineage>
</organism>
<name>US18_HCMVT</name>
<dbReference type="EMBL" id="L04998">
    <property type="protein sequence ID" value="AAA45991.1"/>
    <property type="molecule type" value="Genomic_DNA"/>
</dbReference>
<dbReference type="PIR" id="B27231">
    <property type="entry name" value="QQBEG2"/>
</dbReference>
<dbReference type="RefSeq" id="YP_081603.1">
    <property type="nucleotide sequence ID" value="NC_006273.2"/>
</dbReference>
<dbReference type="TCDB" id="1.A.14.4.3">
    <property type="family name" value="the calcium transporter a (cata) family (formerly the testis-enhanced gene transfer (tegt) family)"/>
</dbReference>
<dbReference type="GeneID" id="3077472"/>
<dbReference type="KEGG" id="vg:3077472"/>
<dbReference type="GO" id="GO:0016020">
    <property type="term" value="C:membrane"/>
    <property type="evidence" value="ECO:0007669"/>
    <property type="project" value="UniProtKB-SubCell"/>
</dbReference>
<organismHost>
    <name type="scientific">Homo sapiens</name>
    <name type="common">Human</name>
    <dbReference type="NCBI Taxonomy" id="9606"/>
</organismHost>
<reference key="1">
    <citation type="journal article" date="1993" name="J. Virol.">
        <title>Characterization of a structurally tricistronic gene of human cytomegalovirus composed of U(s)18, U(s)19, and U(s)20.</title>
        <authorList>
            <person name="Guo Y.-W."/>
            <person name="Huang E.S."/>
        </authorList>
    </citation>
    <scope>NUCLEOTIDE SEQUENCE [GENOMIC DNA]</scope>
</reference>
<sequence>MGDTASVSEHHESPTVTIVPLHRSHALVAEQQLFQWLKRFKLLMEVYHGLVWQLACTLTVCLLAWLAFPDVQGQCANGIVPALSSIVPVSTLAMLRGFAEFRPHTTNFAHLTVACLLINTGITVCTGFCGERRVIGLSFALVMVFFVLCSGLTYLAGNNPTRWKVIGIGYGWSVIVFYLLLYFSPVLWVSKIYSGLYVLVVTAASAVLIYETLDLIYQRGTLSKNSVCVSVVLYTIVMSLLNMSVAIFSGHVWVQQYAEKHGGRIDGVSLLSLL</sequence>
<protein>
    <recommendedName>
        <fullName>Transmembrane protein HWLF5</fullName>
    </recommendedName>
</protein>
<accession>P69335</accession>
<accession>P09726</accession>